<organismHost>
    <name type="scientific">Cricetidae sp.</name>
    <name type="common">Hamster</name>
    <dbReference type="NCBI Taxonomy" id="36483"/>
</organismHost>
<organismHost>
    <name type="scientific">Rattus norvegicus</name>
    <name type="common">Rat</name>
    <dbReference type="NCBI Taxonomy" id="10116"/>
</organismHost>
<accession>P03136</accession>
<reference key="1">
    <citation type="journal article" date="1983" name="J. Virol.">
        <title>Parvovirus genome: nucleotide sequence of H-1 and mapping of its genes by hybrid-arrested translation.</title>
        <authorList>
            <person name="Rhode S.L. III"/>
            <person name="Paradiso P.R."/>
        </authorList>
    </citation>
    <scope>NUCLEOTIDE SEQUENCE [GENOMIC DNA]</scope>
</reference>
<comment type="function">
    <text evidence="1">Capsid protein self-assembles to form an icosahedral capsid with a T=1 symmetry, about 22 nm in diameter, and consisting of 60 copies of two size variants of the capsid proteins, VP1 and VP2, which differ by the presence of an N-terminal extension in the minor protein VP1. The capsid encapsulates the genomic ssDNA. Capsid proteins are responsible for the attachment to host cell receptors. This attachment induces virion internalization predominantly through clathrin-dependent endocytosis. Binding to the host receptors also induces capsid rearrangements leading to surface exposure of VP1 N-terminus, specifically its phospholipase A2-like region and putative nuclear localization signal(s). VP1 N-terminus might serve as a lipolytic enzyme to breach the endosomal membrane during entry into host cell and might contribute to virus transport to the nucleus (By similarity).</text>
</comment>
<comment type="subcellular location">
    <subcellularLocation>
        <location evidence="1">Virion</location>
    </subcellularLocation>
    <subcellularLocation>
        <location evidence="4">Host nucleus</location>
    </subcellularLocation>
</comment>
<comment type="alternative products">
    <event type="alternative splicing"/>
    <isoform>
        <id>P03136-1</id>
        <name>VP1</name>
        <sequence type="displayed"/>
    </isoform>
    <isoform>
        <id>P03136-2</id>
        <name>VP2</name>
        <sequence type="described" ref="VSP_041140"/>
    </isoform>
</comment>
<comment type="domain">
    <text>The N-terminus of VP1 is sequestered within the mature capsid. It contains a phospholipase A2-like region and putative nuclear localization signals.</text>
</comment>
<comment type="miscellaneous">
    <molecule>Isoform VP1</molecule>
    <text>Minor splicing isoform.</text>
</comment>
<comment type="miscellaneous">
    <molecule>Isoform VP2</molecule>
    <text evidence="4">Major splicing isoform produced by deletion of the initiating AUG for VP1 and downstream translation of VP2.</text>
</comment>
<comment type="similarity">
    <text evidence="4">Belongs to the parvoviridae capsid protein family.</text>
</comment>
<feature type="chain" id="PRO_0000039431" description="Capsid protein VP1">
    <location>
        <begin position="1"/>
        <end position="734"/>
    </location>
</feature>
<feature type="region of interest" description="Disordered" evidence="3">
    <location>
        <begin position="1"/>
        <end position="42"/>
    </location>
</feature>
<feature type="region of interest" description="Phospholipase A2-like" evidence="1">
    <location>
        <begin position="19"/>
        <end position="64"/>
    </location>
</feature>
<feature type="region of interest" description="Disordered" evidence="3">
    <location>
        <begin position="95"/>
        <end position="116"/>
    </location>
</feature>
<feature type="region of interest" description="Disordered" evidence="3">
    <location>
        <begin position="134"/>
        <end position="154"/>
    </location>
</feature>
<feature type="short sequence motif" description="Nuclear localization signal" evidence="2">
    <location>
        <begin position="4"/>
        <end position="13"/>
    </location>
</feature>
<feature type="compositionally biased region" description="Basic residues" evidence="3">
    <location>
        <begin position="1"/>
        <end position="10"/>
    </location>
</feature>
<feature type="compositionally biased region" description="Polar residues" evidence="3">
    <location>
        <begin position="25"/>
        <end position="35"/>
    </location>
</feature>
<feature type="compositionally biased region" description="Polar residues" evidence="3">
    <location>
        <begin position="97"/>
        <end position="107"/>
    </location>
</feature>
<feature type="compositionally biased region" description="Polar residues" evidence="3">
    <location>
        <begin position="140"/>
        <end position="153"/>
    </location>
</feature>
<feature type="binding site" evidence="1">
    <location>
        <position position="328"/>
    </location>
    <ligand>
        <name>Mg(2+)</name>
        <dbReference type="ChEBI" id="CHEBI:18420"/>
        <label>1</label>
    </ligand>
</feature>
<feature type="splice variant" id="VSP_041140" description="In isoform VP2." evidence="4">
    <location>
        <begin position="1"/>
        <end position="142"/>
    </location>
</feature>
<feature type="strand" evidence="5">
    <location>
        <begin position="192"/>
        <end position="198"/>
    </location>
</feature>
<feature type="strand" evidence="5">
    <location>
        <begin position="201"/>
        <end position="215"/>
    </location>
</feature>
<feature type="strand" evidence="6">
    <location>
        <begin position="218"/>
        <end position="221"/>
    </location>
</feature>
<feature type="strand" evidence="5">
    <location>
        <begin position="223"/>
        <end position="227"/>
    </location>
</feature>
<feature type="strand" evidence="6">
    <location>
        <begin position="232"/>
        <end position="235"/>
    </location>
</feature>
<feature type="strand" evidence="6">
    <location>
        <begin position="237"/>
        <end position="239"/>
    </location>
</feature>
<feature type="helix" evidence="5">
    <location>
        <begin position="243"/>
        <end position="245"/>
    </location>
</feature>
<feature type="strand" evidence="5">
    <location>
        <begin position="248"/>
        <end position="257"/>
    </location>
</feature>
<feature type="helix" evidence="5">
    <location>
        <begin position="263"/>
        <end position="266"/>
    </location>
</feature>
<feature type="helix" evidence="5">
    <location>
        <begin position="269"/>
        <end position="278"/>
    </location>
</feature>
<feature type="strand" evidence="5">
    <location>
        <begin position="279"/>
        <end position="301"/>
    </location>
</feature>
<feature type="strand" evidence="5">
    <location>
        <begin position="311"/>
        <end position="315"/>
    </location>
</feature>
<feature type="strand" evidence="5">
    <location>
        <begin position="321"/>
        <end position="325"/>
    </location>
</feature>
<feature type="helix" evidence="5">
    <location>
        <begin position="336"/>
        <end position="339"/>
    </location>
</feature>
<feature type="strand" evidence="5">
    <location>
        <begin position="354"/>
        <end position="360"/>
    </location>
</feature>
<feature type="strand" evidence="5">
    <location>
        <begin position="364"/>
        <end position="366"/>
    </location>
</feature>
<feature type="strand" evidence="5">
    <location>
        <begin position="381"/>
        <end position="383"/>
    </location>
</feature>
<feature type="helix" evidence="5">
    <location>
        <begin position="388"/>
        <end position="390"/>
    </location>
</feature>
<feature type="helix" evidence="5">
    <location>
        <begin position="396"/>
        <end position="399"/>
    </location>
</feature>
<feature type="strand" evidence="5">
    <location>
        <begin position="403"/>
        <end position="405"/>
    </location>
</feature>
<feature type="strand" evidence="6">
    <location>
        <begin position="426"/>
        <end position="428"/>
    </location>
</feature>
<feature type="helix" evidence="5">
    <location>
        <begin position="432"/>
        <end position="434"/>
    </location>
</feature>
<feature type="strand" evidence="6">
    <location>
        <begin position="441"/>
        <end position="443"/>
    </location>
</feature>
<feature type="turn" evidence="5">
    <location>
        <begin position="457"/>
        <end position="459"/>
    </location>
</feature>
<feature type="turn" evidence="5">
    <location>
        <begin position="474"/>
        <end position="476"/>
    </location>
</feature>
<feature type="strand" evidence="5">
    <location>
        <begin position="480"/>
        <end position="484"/>
    </location>
</feature>
<feature type="strand" evidence="5">
    <location>
        <begin position="492"/>
        <end position="495"/>
    </location>
</feature>
<feature type="strand" evidence="5">
    <location>
        <begin position="498"/>
        <end position="501"/>
    </location>
</feature>
<feature type="turn" evidence="5">
    <location>
        <begin position="510"/>
        <end position="513"/>
    </location>
</feature>
<feature type="helix" evidence="5">
    <location>
        <begin position="516"/>
        <end position="518"/>
    </location>
</feature>
<feature type="strand" evidence="5">
    <location>
        <begin position="521"/>
        <end position="525"/>
    </location>
</feature>
<feature type="helix" evidence="5">
    <location>
        <begin position="527"/>
        <end position="529"/>
    </location>
</feature>
<feature type="strand" evidence="5">
    <location>
        <begin position="541"/>
        <end position="545"/>
    </location>
</feature>
<feature type="strand" evidence="6">
    <location>
        <begin position="550"/>
        <end position="552"/>
    </location>
</feature>
<feature type="helix" evidence="5">
    <location>
        <begin position="556"/>
        <end position="558"/>
    </location>
</feature>
<feature type="strand" evidence="6">
    <location>
        <begin position="560"/>
        <end position="562"/>
    </location>
</feature>
<feature type="helix" evidence="5">
    <location>
        <begin position="572"/>
        <end position="574"/>
    </location>
</feature>
<feature type="strand" evidence="6">
    <location>
        <begin position="575"/>
        <end position="580"/>
    </location>
</feature>
<feature type="helix" evidence="5">
    <location>
        <begin position="590"/>
        <end position="592"/>
    </location>
</feature>
<feature type="turn" evidence="6">
    <location>
        <begin position="610"/>
        <end position="612"/>
    </location>
</feature>
<feature type="strand" evidence="5">
    <location>
        <begin position="622"/>
        <end position="624"/>
    </location>
</feature>
<feature type="strand" evidence="5">
    <location>
        <begin position="633"/>
        <end position="635"/>
    </location>
</feature>
<feature type="strand" evidence="5">
    <location>
        <begin position="644"/>
        <end position="648"/>
    </location>
</feature>
<feature type="strand" evidence="5">
    <location>
        <begin position="668"/>
        <end position="684"/>
    </location>
</feature>
<feature type="helix" evidence="5">
    <location>
        <begin position="708"/>
        <end position="711"/>
    </location>
</feature>
<feature type="strand" evidence="6">
    <location>
        <begin position="729"/>
        <end position="731"/>
    </location>
</feature>
<name>CAPSD_PAVHH</name>
<evidence type="ECO:0000250" key="1"/>
<evidence type="ECO:0000255" key="2"/>
<evidence type="ECO:0000256" key="3">
    <source>
        <dbReference type="SAM" id="MobiDB-lite"/>
    </source>
</evidence>
<evidence type="ECO:0000305" key="4"/>
<evidence type="ECO:0007829" key="5">
    <source>
        <dbReference type="PDB" id="4G0R"/>
    </source>
</evidence>
<evidence type="ECO:0007829" key="6">
    <source>
        <dbReference type="PDB" id="4GBT"/>
    </source>
</evidence>
<protein>
    <recommendedName>
        <fullName>Capsid protein VP1</fullName>
    </recommendedName>
    <alternativeName>
        <fullName>Coat protein VP1</fullName>
    </alternativeName>
</protein>
<dbReference type="EMBL" id="X01457">
    <property type="protein sequence ID" value="CAB57285.1"/>
    <property type="status" value="ALT_SEQ"/>
    <property type="molecule type" value="Genomic_DNA"/>
</dbReference>
<dbReference type="PIR" id="A03699">
    <property type="entry name" value="VCPVV2"/>
</dbReference>
<dbReference type="PDB" id="4G0R">
    <property type="method" value="X-ray"/>
    <property type="resolution" value="2.70 A"/>
    <property type="chains" value="A=1-734"/>
</dbReference>
<dbReference type="PDB" id="4GBT">
    <property type="method" value="X-ray"/>
    <property type="resolution" value="3.20 A"/>
    <property type="chains" value="A=1-734"/>
</dbReference>
<dbReference type="PDBsum" id="4G0R"/>
<dbReference type="PDBsum" id="4GBT"/>
<dbReference type="SMR" id="P03136"/>
<dbReference type="EvolutionaryTrace" id="P03136"/>
<dbReference type="Proteomes" id="UP000007897">
    <property type="component" value="Genome"/>
</dbReference>
<dbReference type="GO" id="GO:0043657">
    <property type="term" value="C:host cell"/>
    <property type="evidence" value="ECO:0007669"/>
    <property type="project" value="GOC"/>
</dbReference>
<dbReference type="GO" id="GO:0042025">
    <property type="term" value="C:host cell nucleus"/>
    <property type="evidence" value="ECO:0007669"/>
    <property type="project" value="UniProtKB-SubCell"/>
</dbReference>
<dbReference type="GO" id="GO:0039615">
    <property type="term" value="C:T=1 icosahedral viral capsid"/>
    <property type="evidence" value="ECO:0007669"/>
    <property type="project" value="UniProtKB-KW"/>
</dbReference>
<dbReference type="GO" id="GO:0046872">
    <property type="term" value="F:metal ion binding"/>
    <property type="evidence" value="ECO:0007669"/>
    <property type="project" value="UniProtKB-KW"/>
</dbReference>
<dbReference type="GO" id="GO:0005198">
    <property type="term" value="F:structural molecule activity"/>
    <property type="evidence" value="ECO:0007669"/>
    <property type="project" value="InterPro"/>
</dbReference>
<dbReference type="GO" id="GO:0075512">
    <property type="term" value="P:clathrin-dependent endocytosis of virus by host cell"/>
    <property type="evidence" value="ECO:0007669"/>
    <property type="project" value="UniProtKB-KW"/>
</dbReference>
<dbReference type="GO" id="GO:0075521">
    <property type="term" value="P:microtubule-dependent intracellular transport of viral material towards nucleus"/>
    <property type="evidence" value="ECO:0007669"/>
    <property type="project" value="UniProtKB-KW"/>
</dbReference>
<dbReference type="GO" id="GO:0140267">
    <property type="term" value="P:symbiont entry into host cell via permeabilization of host membrane"/>
    <property type="evidence" value="ECO:0007669"/>
    <property type="project" value="UniProtKB-KW"/>
</dbReference>
<dbReference type="GO" id="GO:0075732">
    <property type="term" value="P:viral penetration into host nucleus"/>
    <property type="evidence" value="ECO:0007669"/>
    <property type="project" value="UniProtKB-KW"/>
</dbReference>
<dbReference type="GO" id="GO:0019062">
    <property type="term" value="P:virion attachment to host cell"/>
    <property type="evidence" value="ECO:0007669"/>
    <property type="project" value="UniProtKB-KW"/>
</dbReference>
<dbReference type="Gene3D" id="2.170.30.10">
    <property type="entry name" value="Parvovirus coat protein VP1/VP2"/>
    <property type="match status" value="1"/>
</dbReference>
<dbReference type="InterPro" id="IPR016184">
    <property type="entry name" value="Capsid/spike_ssDNA_virus"/>
</dbReference>
<dbReference type="InterPro" id="IPR001403">
    <property type="entry name" value="Parvovirus_coat"/>
</dbReference>
<dbReference type="InterPro" id="IPR013607">
    <property type="entry name" value="Phospholipase_A2-like"/>
</dbReference>
<dbReference type="InterPro" id="IPR036952">
    <property type="entry name" value="VP1/VP2"/>
</dbReference>
<dbReference type="Pfam" id="PF00740">
    <property type="entry name" value="Parvo_coat"/>
    <property type="match status" value="2"/>
</dbReference>
<dbReference type="Pfam" id="PF08398">
    <property type="entry name" value="Phospholip_A2_4"/>
    <property type="match status" value="1"/>
</dbReference>
<dbReference type="SUPFAM" id="SSF88645">
    <property type="entry name" value="ssDNA viruses"/>
    <property type="match status" value="1"/>
</dbReference>
<keyword id="KW-0002">3D-structure</keyword>
<keyword id="KW-0025">Alternative splicing</keyword>
<keyword id="KW-0167">Capsid protein</keyword>
<keyword id="KW-1165">Clathrin-mediated endocytosis of virus by host</keyword>
<keyword id="KW-1176">Cytoplasmic inwards viral transport</keyword>
<keyword id="KW-1048">Host nucleus</keyword>
<keyword id="KW-0945">Host-virus interaction</keyword>
<keyword id="KW-0460">Magnesium</keyword>
<keyword id="KW-0479">Metal-binding</keyword>
<keyword id="KW-1177">Microtubular inwards viral transport</keyword>
<keyword id="KW-1140">T=1 icosahedral capsid protein</keyword>
<keyword id="KW-1161">Viral attachment to host cell</keyword>
<keyword id="KW-1162">Viral penetration into host cytoplasm</keyword>
<keyword id="KW-1163">Viral penetration into host nucleus</keyword>
<keyword id="KW-1173">Viral penetration via permeabilization of host membrane</keyword>
<keyword id="KW-0946">Virion</keyword>
<keyword id="KW-1164">Virus endocytosis by host</keyword>
<keyword id="KW-1160">Virus entry into host cell</keyword>
<sequence>MAPPAKRAKRGWVPPGYKYLGPGNSLDQGEPTNPSDAAAKEHDEAYDQYIKSGKNPYLYFSPADQRFIDQTKDAKDWGGKVGHYFFRTKRAFAPKLSTDSEPGTSGVSRPGKRTKPPAHIFVNQARAKKKRASLAAQQRTLTMSDGTETNQPDTGIANARVERSADGGGSSGGGGSGGGGIGVSTGTYDNQTTYKFLGDGWVEITAHASRLLHLGMPPSENYCRVTVHNNQTTGHGTKVKGNMAYDTHQQIWTPWSLVDANAWGVWFQPSDWQFIQNSMESLNLDSLSQELFNVVVKTVTEQQGAGQDAIKVYNNDLTACMMVALDSNNILPYTPAAQTSETLGFYPWKPTAPAPYRYYFFMPRQLSVTSSNSAEGTQITDTIGEPQALNSQFFTIENTLPITLLRTGDEFTTGTYIFNTDPLKLTHTWQTNRHLACLQGITDLPTSDTATASLTANGDRFGSTQTQNVNYVTEALRTRPAQIGFMQPHDNFEANRGGPFKVPVVPLDITAGEDHDANGAIRFNYGKQHGEDWAKQGAAPERYTWDAIDSAAGRDTARCFVQSAPISIPPNQNQILQREDAIAGRTNMHYTNVFNSYGPLSAFPHPDPIYPNGQIWDKELDLEHKPRLHVTAPFVCKNNPPGQLFVHLGPNLTDQFDPNSTTVSRIVTYSTFYWKGILKFKAKLRPNLTWNPVYQATTDSVANSYMNVKKWLPSATGNMHSDPLICRPVPHMTY</sequence>
<proteinExistence type="evidence at protein level"/>
<organism>
    <name type="scientific">Hamster parvovirus H1</name>
    <dbReference type="NCBI Taxonomy" id="10799"/>
    <lineage>
        <taxon>Viruses</taxon>
        <taxon>Monodnaviria</taxon>
        <taxon>Shotokuvirae</taxon>
        <taxon>Cossaviricota</taxon>
        <taxon>Quintoviricetes</taxon>
        <taxon>Piccovirales</taxon>
        <taxon>Parvoviridae</taxon>
        <taxon>Parvovirinae</taxon>
        <taxon>Protoparvovirus</taxon>
        <taxon>Protoparvovirus rodent1</taxon>
    </lineage>
</organism>